<organism>
    <name type="scientific">Parabacteroides distasonis (strain ATCC 8503 / DSM 20701 / CIP 104284 / JCM 5825 / NCTC 11152)</name>
    <dbReference type="NCBI Taxonomy" id="435591"/>
    <lineage>
        <taxon>Bacteria</taxon>
        <taxon>Pseudomonadati</taxon>
        <taxon>Bacteroidota</taxon>
        <taxon>Bacteroidia</taxon>
        <taxon>Bacteroidales</taxon>
        <taxon>Tannerellaceae</taxon>
        <taxon>Parabacteroides</taxon>
    </lineage>
</organism>
<accession>A6LEG9</accession>
<name>IF1_PARD8</name>
<protein>
    <recommendedName>
        <fullName evidence="1">Translation initiation factor IF-1</fullName>
    </recommendedName>
</protein>
<dbReference type="EMBL" id="CP000140">
    <property type="protein sequence ID" value="ABR44083.1"/>
    <property type="molecule type" value="Genomic_DNA"/>
</dbReference>
<dbReference type="RefSeq" id="WP_005854007.1">
    <property type="nucleotide sequence ID" value="NZ_LR215978.1"/>
</dbReference>
<dbReference type="SMR" id="A6LEG9"/>
<dbReference type="STRING" id="435591.BDI_2358"/>
<dbReference type="PaxDb" id="435591-BDI_2358"/>
<dbReference type="GeneID" id="93522351"/>
<dbReference type="KEGG" id="pdi:BDI_2358"/>
<dbReference type="eggNOG" id="COG0361">
    <property type="taxonomic scope" value="Bacteria"/>
</dbReference>
<dbReference type="HOGENOM" id="CLU_151267_1_0_10"/>
<dbReference type="BioCyc" id="PDIS435591:G1G5A-2423-MONOMER"/>
<dbReference type="Proteomes" id="UP000000566">
    <property type="component" value="Chromosome"/>
</dbReference>
<dbReference type="GO" id="GO:0005829">
    <property type="term" value="C:cytosol"/>
    <property type="evidence" value="ECO:0007669"/>
    <property type="project" value="TreeGrafter"/>
</dbReference>
<dbReference type="GO" id="GO:0043022">
    <property type="term" value="F:ribosome binding"/>
    <property type="evidence" value="ECO:0007669"/>
    <property type="project" value="UniProtKB-UniRule"/>
</dbReference>
<dbReference type="GO" id="GO:0019843">
    <property type="term" value="F:rRNA binding"/>
    <property type="evidence" value="ECO:0007669"/>
    <property type="project" value="UniProtKB-UniRule"/>
</dbReference>
<dbReference type="GO" id="GO:0003743">
    <property type="term" value="F:translation initiation factor activity"/>
    <property type="evidence" value="ECO:0007669"/>
    <property type="project" value="UniProtKB-UniRule"/>
</dbReference>
<dbReference type="CDD" id="cd04451">
    <property type="entry name" value="S1_IF1"/>
    <property type="match status" value="1"/>
</dbReference>
<dbReference type="FunFam" id="2.40.50.140:FF:000002">
    <property type="entry name" value="Translation initiation factor IF-1"/>
    <property type="match status" value="1"/>
</dbReference>
<dbReference type="Gene3D" id="2.40.50.140">
    <property type="entry name" value="Nucleic acid-binding proteins"/>
    <property type="match status" value="1"/>
</dbReference>
<dbReference type="HAMAP" id="MF_00075">
    <property type="entry name" value="IF_1"/>
    <property type="match status" value="1"/>
</dbReference>
<dbReference type="InterPro" id="IPR012340">
    <property type="entry name" value="NA-bd_OB-fold"/>
</dbReference>
<dbReference type="InterPro" id="IPR006196">
    <property type="entry name" value="RNA-binding_domain_S1_IF1"/>
</dbReference>
<dbReference type="InterPro" id="IPR003029">
    <property type="entry name" value="S1_domain"/>
</dbReference>
<dbReference type="InterPro" id="IPR004368">
    <property type="entry name" value="TIF_IF1"/>
</dbReference>
<dbReference type="NCBIfam" id="TIGR00008">
    <property type="entry name" value="infA"/>
    <property type="match status" value="1"/>
</dbReference>
<dbReference type="PANTHER" id="PTHR33370">
    <property type="entry name" value="TRANSLATION INITIATION FACTOR IF-1, CHLOROPLASTIC"/>
    <property type="match status" value="1"/>
</dbReference>
<dbReference type="PANTHER" id="PTHR33370:SF1">
    <property type="entry name" value="TRANSLATION INITIATION FACTOR IF-1, CHLOROPLASTIC"/>
    <property type="match status" value="1"/>
</dbReference>
<dbReference type="Pfam" id="PF01176">
    <property type="entry name" value="eIF-1a"/>
    <property type="match status" value="1"/>
</dbReference>
<dbReference type="SMART" id="SM00316">
    <property type="entry name" value="S1"/>
    <property type="match status" value="1"/>
</dbReference>
<dbReference type="SUPFAM" id="SSF50249">
    <property type="entry name" value="Nucleic acid-binding proteins"/>
    <property type="match status" value="1"/>
</dbReference>
<dbReference type="PROSITE" id="PS50832">
    <property type="entry name" value="S1_IF1_TYPE"/>
    <property type="match status" value="1"/>
</dbReference>
<sequence length="72" mass="8207">MAKQSAIEKDGVIVEALSNAMFRVELENGHEITAHISGKMRMHYIKILPGDKVRVEMSPYDLSKGRIAFRYK</sequence>
<keyword id="KW-0963">Cytoplasm</keyword>
<keyword id="KW-0396">Initiation factor</keyword>
<keyword id="KW-0648">Protein biosynthesis</keyword>
<keyword id="KW-1185">Reference proteome</keyword>
<keyword id="KW-0694">RNA-binding</keyword>
<keyword id="KW-0699">rRNA-binding</keyword>
<reference key="1">
    <citation type="journal article" date="2007" name="PLoS Biol.">
        <title>Evolution of symbiotic bacteria in the distal human intestine.</title>
        <authorList>
            <person name="Xu J."/>
            <person name="Mahowald M.A."/>
            <person name="Ley R.E."/>
            <person name="Lozupone C.A."/>
            <person name="Hamady M."/>
            <person name="Martens E.C."/>
            <person name="Henrissat B."/>
            <person name="Coutinho P.M."/>
            <person name="Minx P."/>
            <person name="Latreille P."/>
            <person name="Cordum H."/>
            <person name="Van Brunt A."/>
            <person name="Kim K."/>
            <person name="Fulton R.S."/>
            <person name="Fulton L.A."/>
            <person name="Clifton S.W."/>
            <person name="Wilson R.K."/>
            <person name="Knight R.D."/>
            <person name="Gordon J.I."/>
        </authorList>
    </citation>
    <scope>NUCLEOTIDE SEQUENCE [LARGE SCALE GENOMIC DNA]</scope>
    <source>
        <strain>ATCC 8503 / DSM 20701 / CIP 104284 / JCM 5825 / NCTC 11152</strain>
    </source>
</reference>
<comment type="function">
    <text evidence="1">One of the essential components for the initiation of protein synthesis. Stabilizes the binding of IF-2 and IF-3 on the 30S subunit to which N-formylmethionyl-tRNA(fMet) subsequently binds. Helps modulate mRNA selection, yielding the 30S pre-initiation complex (PIC). Upon addition of the 50S ribosomal subunit IF-1, IF-2 and IF-3 are released leaving the mature 70S translation initiation complex.</text>
</comment>
<comment type="subunit">
    <text evidence="1">Component of the 30S ribosomal translation pre-initiation complex which assembles on the 30S ribosome in the order IF-2 and IF-3, IF-1 and N-formylmethionyl-tRNA(fMet); mRNA recruitment can occur at any time during PIC assembly.</text>
</comment>
<comment type="subcellular location">
    <subcellularLocation>
        <location evidence="1">Cytoplasm</location>
    </subcellularLocation>
</comment>
<comment type="similarity">
    <text evidence="1">Belongs to the IF-1 family.</text>
</comment>
<gene>
    <name evidence="1" type="primary">infA</name>
    <name type="ordered locus">BDI_2358</name>
</gene>
<evidence type="ECO:0000255" key="1">
    <source>
        <dbReference type="HAMAP-Rule" id="MF_00075"/>
    </source>
</evidence>
<feature type="chain" id="PRO_0000338876" description="Translation initiation factor IF-1">
    <location>
        <begin position="1"/>
        <end position="72"/>
    </location>
</feature>
<feature type="domain" description="S1-like" evidence="1">
    <location>
        <begin position="1"/>
        <end position="72"/>
    </location>
</feature>
<proteinExistence type="inferred from homology"/>